<keyword id="KW-0067">ATP-binding</keyword>
<keyword id="KW-0436">Ligase</keyword>
<keyword id="KW-0547">Nucleotide-binding</keyword>
<keyword id="KW-0658">Purine biosynthesis</keyword>
<keyword id="KW-1185">Reference proteome</keyword>
<proteinExistence type="inferred from homology"/>
<comment type="catalytic activity">
    <reaction evidence="1">
        <text>5-amino-1-(5-phospho-D-ribosyl)imidazole-4-carboxylate + L-aspartate + ATP = (2S)-2-[5-amino-1-(5-phospho-beta-D-ribosyl)imidazole-4-carboxamido]succinate + ADP + phosphate + 2 H(+)</text>
        <dbReference type="Rhea" id="RHEA:22628"/>
        <dbReference type="ChEBI" id="CHEBI:15378"/>
        <dbReference type="ChEBI" id="CHEBI:29991"/>
        <dbReference type="ChEBI" id="CHEBI:30616"/>
        <dbReference type="ChEBI" id="CHEBI:43474"/>
        <dbReference type="ChEBI" id="CHEBI:58443"/>
        <dbReference type="ChEBI" id="CHEBI:77657"/>
        <dbReference type="ChEBI" id="CHEBI:456216"/>
        <dbReference type="EC" id="6.3.2.6"/>
    </reaction>
</comment>
<comment type="pathway">
    <text evidence="1">Purine metabolism; IMP biosynthesis via de novo pathway; 5-amino-1-(5-phospho-D-ribosyl)imidazole-4-carboxamide from 5-amino-1-(5-phospho-D-ribosyl)imidazole-4-carboxylate: step 1/2.</text>
</comment>
<comment type="similarity">
    <text evidence="1">Belongs to the SAICAR synthetase family.</text>
</comment>
<gene>
    <name evidence="1" type="primary">purC</name>
    <name type="ordered locus">Plut_1194</name>
</gene>
<feature type="chain" id="PRO_1000018748" description="Phosphoribosylaminoimidazole-succinocarboxamide synthase">
    <location>
        <begin position="1"/>
        <end position="239"/>
    </location>
</feature>
<accession>Q3B3M5</accession>
<reference key="1">
    <citation type="submission" date="2005-08" db="EMBL/GenBank/DDBJ databases">
        <title>Complete sequence of Pelodictyon luteolum DSM 273.</title>
        <authorList>
            <consortium name="US DOE Joint Genome Institute"/>
            <person name="Copeland A."/>
            <person name="Lucas S."/>
            <person name="Lapidus A."/>
            <person name="Barry K."/>
            <person name="Detter J.C."/>
            <person name="Glavina T."/>
            <person name="Hammon N."/>
            <person name="Israni S."/>
            <person name="Pitluck S."/>
            <person name="Bryant D."/>
            <person name="Schmutz J."/>
            <person name="Larimer F."/>
            <person name="Land M."/>
            <person name="Kyrpides N."/>
            <person name="Ivanova N."/>
            <person name="Richardson P."/>
        </authorList>
    </citation>
    <scope>NUCLEOTIDE SEQUENCE [LARGE SCALE GENOMIC DNA]</scope>
    <source>
        <strain>DSM 273 / BCRC 81028 / 2530</strain>
    </source>
</reference>
<sequence>MKKTTLLHEGKAKKVFLTDEADLVIQEFKDDATAFNNKKKGTIAEKGVVNNAISCKLFTMLEGEGVRTHLVEKLSDRDMLCKKLDIIKVEVVVRNIAAGSLVKRYGFTEGSVLREPIVEFYLKNDDLDDPLMNESHAVALGVASLDELAVLGTRALRVNEVLKPFFAGVKLKLVDFKLEFGRHHGEILLGDEISPDTCRFWDLETNEKLDKDRFRLDLGGIEDAYSEVQKRVLGSGALS</sequence>
<organism>
    <name type="scientific">Chlorobium luteolum (strain DSM 273 / BCRC 81028 / 2530)</name>
    <name type="common">Pelodictyon luteolum</name>
    <dbReference type="NCBI Taxonomy" id="319225"/>
    <lineage>
        <taxon>Bacteria</taxon>
        <taxon>Pseudomonadati</taxon>
        <taxon>Chlorobiota</taxon>
        <taxon>Chlorobiia</taxon>
        <taxon>Chlorobiales</taxon>
        <taxon>Chlorobiaceae</taxon>
        <taxon>Chlorobium/Pelodictyon group</taxon>
        <taxon>Pelodictyon</taxon>
    </lineage>
</organism>
<evidence type="ECO:0000255" key="1">
    <source>
        <dbReference type="HAMAP-Rule" id="MF_00137"/>
    </source>
</evidence>
<protein>
    <recommendedName>
        <fullName evidence="1">Phosphoribosylaminoimidazole-succinocarboxamide synthase</fullName>
        <ecNumber evidence="1">6.3.2.6</ecNumber>
    </recommendedName>
    <alternativeName>
        <fullName evidence="1">SAICAR synthetase</fullName>
    </alternativeName>
</protein>
<name>PUR7_CHLL3</name>
<dbReference type="EC" id="6.3.2.6" evidence="1"/>
<dbReference type="EMBL" id="CP000096">
    <property type="protein sequence ID" value="ABB24056.1"/>
    <property type="molecule type" value="Genomic_DNA"/>
</dbReference>
<dbReference type="RefSeq" id="WP_011357928.1">
    <property type="nucleotide sequence ID" value="NC_007512.1"/>
</dbReference>
<dbReference type="SMR" id="Q3B3M5"/>
<dbReference type="STRING" id="319225.Plut_1194"/>
<dbReference type="KEGG" id="plt:Plut_1194"/>
<dbReference type="eggNOG" id="COG0152">
    <property type="taxonomic scope" value="Bacteria"/>
</dbReference>
<dbReference type="HOGENOM" id="CLU_061495_2_0_10"/>
<dbReference type="OrthoDB" id="9801549at2"/>
<dbReference type="UniPathway" id="UPA00074">
    <property type="reaction ID" value="UER00131"/>
</dbReference>
<dbReference type="Proteomes" id="UP000002709">
    <property type="component" value="Chromosome"/>
</dbReference>
<dbReference type="GO" id="GO:0005524">
    <property type="term" value="F:ATP binding"/>
    <property type="evidence" value="ECO:0007669"/>
    <property type="project" value="UniProtKB-KW"/>
</dbReference>
<dbReference type="GO" id="GO:0004639">
    <property type="term" value="F:phosphoribosylaminoimidazolesuccinocarboxamide synthase activity"/>
    <property type="evidence" value="ECO:0007669"/>
    <property type="project" value="UniProtKB-UniRule"/>
</dbReference>
<dbReference type="GO" id="GO:0006189">
    <property type="term" value="P:'de novo' IMP biosynthetic process"/>
    <property type="evidence" value="ECO:0007669"/>
    <property type="project" value="UniProtKB-UniRule"/>
</dbReference>
<dbReference type="GO" id="GO:0009236">
    <property type="term" value="P:cobalamin biosynthetic process"/>
    <property type="evidence" value="ECO:0007669"/>
    <property type="project" value="InterPro"/>
</dbReference>
<dbReference type="CDD" id="cd01415">
    <property type="entry name" value="SAICAR_synt_PurC"/>
    <property type="match status" value="1"/>
</dbReference>
<dbReference type="FunFam" id="3.30.470.20:FF:000006">
    <property type="entry name" value="Phosphoribosylaminoimidazole-succinocarboxamide synthase"/>
    <property type="match status" value="1"/>
</dbReference>
<dbReference type="Gene3D" id="3.30.470.20">
    <property type="entry name" value="ATP-grasp fold, B domain"/>
    <property type="match status" value="1"/>
</dbReference>
<dbReference type="Gene3D" id="3.30.200.20">
    <property type="entry name" value="Phosphorylase Kinase, domain 1"/>
    <property type="match status" value="1"/>
</dbReference>
<dbReference type="HAMAP" id="MF_00137">
    <property type="entry name" value="SAICAR_synth"/>
    <property type="match status" value="1"/>
</dbReference>
<dbReference type="InterPro" id="IPR028923">
    <property type="entry name" value="SAICAR_synt/ADE2_N"/>
</dbReference>
<dbReference type="InterPro" id="IPR033934">
    <property type="entry name" value="SAICAR_synt_PurC"/>
</dbReference>
<dbReference type="InterPro" id="IPR001636">
    <property type="entry name" value="SAICAR_synth"/>
</dbReference>
<dbReference type="InterPro" id="IPR050089">
    <property type="entry name" value="SAICAR_synthetase"/>
</dbReference>
<dbReference type="InterPro" id="IPR018236">
    <property type="entry name" value="SAICAR_synthetase_CS"/>
</dbReference>
<dbReference type="NCBIfam" id="TIGR00081">
    <property type="entry name" value="purC"/>
    <property type="match status" value="1"/>
</dbReference>
<dbReference type="PANTHER" id="PTHR43599">
    <property type="entry name" value="MULTIFUNCTIONAL PROTEIN ADE2"/>
    <property type="match status" value="1"/>
</dbReference>
<dbReference type="PANTHER" id="PTHR43599:SF3">
    <property type="entry name" value="SI:DKEY-6E2.2"/>
    <property type="match status" value="1"/>
</dbReference>
<dbReference type="Pfam" id="PF01259">
    <property type="entry name" value="SAICAR_synt"/>
    <property type="match status" value="1"/>
</dbReference>
<dbReference type="SUPFAM" id="SSF56104">
    <property type="entry name" value="SAICAR synthase-like"/>
    <property type="match status" value="1"/>
</dbReference>
<dbReference type="PROSITE" id="PS01057">
    <property type="entry name" value="SAICAR_SYNTHETASE_1"/>
    <property type="match status" value="1"/>
</dbReference>
<dbReference type="PROSITE" id="PS01058">
    <property type="entry name" value="SAICAR_SYNTHETASE_2"/>
    <property type="match status" value="1"/>
</dbReference>